<name>UBIE_SHEWM</name>
<sequence>MSEGTPNSTHFGYKTVESDQKADMVAGVFHSVAAKYDIMNDVMSFGIHRMWKRFTIESAGARPGMKVLDLAGGTGDLTAKFSHIVGDKGQVTLADINDSMLKVGREKLRDKGIVGNVNYVQANAEALPFPDNHFDIITIAFGLRNVTDKDAAIRSMLRVLKPGGKLLVLEFSKPKHDVMRKVYDLYSFKVMPKMGALITQDAESYEYLAESIRMHPDQETLKGMMVDAGFEQVEYTNMTDGIVALHKGYKF</sequence>
<comment type="function">
    <text evidence="1">Methyltransferase required for the conversion of demethylmenaquinol (DMKH2) to menaquinol (MKH2) and the conversion of 2-polyprenyl-6-methoxy-1,4-benzoquinol (DDMQH2) to 2-polyprenyl-3-methyl-6-methoxy-1,4-benzoquinol (DMQH2).</text>
</comment>
<comment type="catalytic activity">
    <reaction evidence="1">
        <text>a 2-demethylmenaquinol + S-adenosyl-L-methionine = a menaquinol + S-adenosyl-L-homocysteine + H(+)</text>
        <dbReference type="Rhea" id="RHEA:42640"/>
        <dbReference type="Rhea" id="RHEA-COMP:9539"/>
        <dbReference type="Rhea" id="RHEA-COMP:9563"/>
        <dbReference type="ChEBI" id="CHEBI:15378"/>
        <dbReference type="ChEBI" id="CHEBI:18151"/>
        <dbReference type="ChEBI" id="CHEBI:55437"/>
        <dbReference type="ChEBI" id="CHEBI:57856"/>
        <dbReference type="ChEBI" id="CHEBI:59789"/>
        <dbReference type="EC" id="2.1.1.163"/>
    </reaction>
</comment>
<comment type="catalytic activity">
    <reaction evidence="1">
        <text>a 2-methoxy-6-(all-trans-polyprenyl)benzene-1,4-diol + S-adenosyl-L-methionine = a 5-methoxy-2-methyl-3-(all-trans-polyprenyl)benzene-1,4-diol + S-adenosyl-L-homocysteine + H(+)</text>
        <dbReference type="Rhea" id="RHEA:28286"/>
        <dbReference type="Rhea" id="RHEA-COMP:10858"/>
        <dbReference type="Rhea" id="RHEA-COMP:10859"/>
        <dbReference type="ChEBI" id="CHEBI:15378"/>
        <dbReference type="ChEBI" id="CHEBI:57856"/>
        <dbReference type="ChEBI" id="CHEBI:59789"/>
        <dbReference type="ChEBI" id="CHEBI:84166"/>
        <dbReference type="ChEBI" id="CHEBI:84167"/>
        <dbReference type="EC" id="2.1.1.201"/>
    </reaction>
</comment>
<comment type="pathway">
    <text evidence="1">Quinol/quinone metabolism; menaquinone biosynthesis; menaquinol from 1,4-dihydroxy-2-naphthoate: step 2/2.</text>
</comment>
<comment type="pathway">
    <text evidence="1">Cofactor biosynthesis; ubiquinone biosynthesis.</text>
</comment>
<comment type="similarity">
    <text evidence="1">Belongs to the class I-like SAM-binding methyltransferase superfamily. MenG/UbiE family.</text>
</comment>
<proteinExistence type="inferred from homology"/>
<organism>
    <name type="scientific">Shewanella woodyi (strain ATCC 51908 / MS32)</name>
    <dbReference type="NCBI Taxonomy" id="392500"/>
    <lineage>
        <taxon>Bacteria</taxon>
        <taxon>Pseudomonadati</taxon>
        <taxon>Pseudomonadota</taxon>
        <taxon>Gammaproteobacteria</taxon>
        <taxon>Alteromonadales</taxon>
        <taxon>Shewanellaceae</taxon>
        <taxon>Shewanella</taxon>
    </lineage>
</organism>
<accession>B1KR07</accession>
<gene>
    <name evidence="1" type="primary">ubiE</name>
    <name type="ordered locus">Swoo_0527</name>
</gene>
<evidence type="ECO:0000255" key="1">
    <source>
        <dbReference type="HAMAP-Rule" id="MF_01813"/>
    </source>
</evidence>
<feature type="chain" id="PRO_1000187813" description="Ubiquinone/menaquinone biosynthesis C-methyltransferase UbiE">
    <location>
        <begin position="1"/>
        <end position="251"/>
    </location>
</feature>
<feature type="binding site" evidence="1">
    <location>
        <position position="74"/>
    </location>
    <ligand>
        <name>S-adenosyl-L-methionine</name>
        <dbReference type="ChEBI" id="CHEBI:59789"/>
    </ligand>
</feature>
<feature type="binding site" evidence="1">
    <location>
        <position position="95"/>
    </location>
    <ligand>
        <name>S-adenosyl-L-methionine</name>
        <dbReference type="ChEBI" id="CHEBI:59789"/>
    </ligand>
</feature>
<feature type="binding site" evidence="1">
    <location>
        <begin position="123"/>
        <end position="124"/>
    </location>
    <ligand>
        <name>S-adenosyl-L-methionine</name>
        <dbReference type="ChEBI" id="CHEBI:59789"/>
    </ligand>
</feature>
<dbReference type="EC" id="2.1.1.163" evidence="1"/>
<dbReference type="EC" id="2.1.1.201" evidence="1"/>
<dbReference type="EMBL" id="CP000961">
    <property type="protein sequence ID" value="ACA84824.1"/>
    <property type="molecule type" value="Genomic_DNA"/>
</dbReference>
<dbReference type="RefSeq" id="WP_012323172.1">
    <property type="nucleotide sequence ID" value="NC_010506.1"/>
</dbReference>
<dbReference type="SMR" id="B1KR07"/>
<dbReference type="STRING" id="392500.Swoo_0527"/>
<dbReference type="KEGG" id="swd:Swoo_0527"/>
<dbReference type="eggNOG" id="COG2226">
    <property type="taxonomic scope" value="Bacteria"/>
</dbReference>
<dbReference type="HOGENOM" id="CLU_037990_0_0_6"/>
<dbReference type="UniPathway" id="UPA00079">
    <property type="reaction ID" value="UER00169"/>
</dbReference>
<dbReference type="UniPathway" id="UPA00232"/>
<dbReference type="Proteomes" id="UP000002168">
    <property type="component" value="Chromosome"/>
</dbReference>
<dbReference type="GO" id="GO:0008425">
    <property type="term" value="F:2-methoxy-6-polyprenyl-1,4-benzoquinol methyltransferase activity"/>
    <property type="evidence" value="ECO:0007669"/>
    <property type="project" value="UniProtKB-UniRule"/>
</dbReference>
<dbReference type="GO" id="GO:0043770">
    <property type="term" value="F:demethylmenaquinone methyltransferase activity"/>
    <property type="evidence" value="ECO:0007669"/>
    <property type="project" value="UniProtKB-UniRule"/>
</dbReference>
<dbReference type="GO" id="GO:0009060">
    <property type="term" value="P:aerobic respiration"/>
    <property type="evidence" value="ECO:0007669"/>
    <property type="project" value="UniProtKB-UniRule"/>
</dbReference>
<dbReference type="GO" id="GO:0009234">
    <property type="term" value="P:menaquinone biosynthetic process"/>
    <property type="evidence" value="ECO:0007669"/>
    <property type="project" value="UniProtKB-UniRule"/>
</dbReference>
<dbReference type="GO" id="GO:0032259">
    <property type="term" value="P:methylation"/>
    <property type="evidence" value="ECO:0007669"/>
    <property type="project" value="UniProtKB-KW"/>
</dbReference>
<dbReference type="CDD" id="cd02440">
    <property type="entry name" value="AdoMet_MTases"/>
    <property type="match status" value="1"/>
</dbReference>
<dbReference type="FunFam" id="3.40.50.150:FF:000014">
    <property type="entry name" value="Ubiquinone/menaquinone biosynthesis C-methyltransferase UbiE"/>
    <property type="match status" value="1"/>
</dbReference>
<dbReference type="Gene3D" id="3.40.50.150">
    <property type="entry name" value="Vaccinia Virus protein VP39"/>
    <property type="match status" value="1"/>
</dbReference>
<dbReference type="HAMAP" id="MF_01813">
    <property type="entry name" value="MenG_UbiE_methyltr"/>
    <property type="match status" value="1"/>
</dbReference>
<dbReference type="InterPro" id="IPR029063">
    <property type="entry name" value="SAM-dependent_MTases_sf"/>
</dbReference>
<dbReference type="InterPro" id="IPR004033">
    <property type="entry name" value="UbiE/COQ5_MeTrFase"/>
</dbReference>
<dbReference type="InterPro" id="IPR023576">
    <property type="entry name" value="UbiE/COQ5_MeTrFase_CS"/>
</dbReference>
<dbReference type="NCBIfam" id="TIGR01934">
    <property type="entry name" value="MenG_MenH_UbiE"/>
    <property type="match status" value="1"/>
</dbReference>
<dbReference type="NCBIfam" id="NF001240">
    <property type="entry name" value="PRK00216.1-1"/>
    <property type="match status" value="1"/>
</dbReference>
<dbReference type="NCBIfam" id="NF001242">
    <property type="entry name" value="PRK00216.1-3"/>
    <property type="match status" value="1"/>
</dbReference>
<dbReference type="NCBIfam" id="NF001244">
    <property type="entry name" value="PRK00216.1-5"/>
    <property type="match status" value="1"/>
</dbReference>
<dbReference type="PANTHER" id="PTHR43591:SF24">
    <property type="entry name" value="2-METHOXY-6-POLYPRENYL-1,4-BENZOQUINOL METHYLASE, MITOCHONDRIAL"/>
    <property type="match status" value="1"/>
</dbReference>
<dbReference type="PANTHER" id="PTHR43591">
    <property type="entry name" value="METHYLTRANSFERASE"/>
    <property type="match status" value="1"/>
</dbReference>
<dbReference type="Pfam" id="PF01209">
    <property type="entry name" value="Ubie_methyltran"/>
    <property type="match status" value="1"/>
</dbReference>
<dbReference type="SUPFAM" id="SSF53335">
    <property type="entry name" value="S-adenosyl-L-methionine-dependent methyltransferases"/>
    <property type="match status" value="1"/>
</dbReference>
<dbReference type="PROSITE" id="PS51608">
    <property type="entry name" value="SAM_MT_UBIE"/>
    <property type="match status" value="1"/>
</dbReference>
<dbReference type="PROSITE" id="PS01183">
    <property type="entry name" value="UBIE_1"/>
    <property type="match status" value="1"/>
</dbReference>
<dbReference type="PROSITE" id="PS01184">
    <property type="entry name" value="UBIE_2"/>
    <property type="match status" value="1"/>
</dbReference>
<reference key="1">
    <citation type="submission" date="2008-02" db="EMBL/GenBank/DDBJ databases">
        <title>Complete sequence of Shewanella woodyi ATCC 51908.</title>
        <authorList>
            <consortium name="US DOE Joint Genome Institute"/>
            <person name="Copeland A."/>
            <person name="Lucas S."/>
            <person name="Lapidus A."/>
            <person name="Glavina del Rio T."/>
            <person name="Dalin E."/>
            <person name="Tice H."/>
            <person name="Bruce D."/>
            <person name="Goodwin L."/>
            <person name="Pitluck S."/>
            <person name="Sims D."/>
            <person name="Brettin T."/>
            <person name="Detter J.C."/>
            <person name="Han C."/>
            <person name="Kuske C.R."/>
            <person name="Schmutz J."/>
            <person name="Larimer F."/>
            <person name="Land M."/>
            <person name="Hauser L."/>
            <person name="Kyrpides N."/>
            <person name="Lykidis A."/>
            <person name="Zhao J.-S."/>
            <person name="Richardson P."/>
        </authorList>
    </citation>
    <scope>NUCLEOTIDE SEQUENCE [LARGE SCALE GENOMIC DNA]</scope>
    <source>
        <strain>ATCC 51908 / MS32</strain>
    </source>
</reference>
<keyword id="KW-0474">Menaquinone biosynthesis</keyword>
<keyword id="KW-0489">Methyltransferase</keyword>
<keyword id="KW-1185">Reference proteome</keyword>
<keyword id="KW-0949">S-adenosyl-L-methionine</keyword>
<keyword id="KW-0808">Transferase</keyword>
<keyword id="KW-0831">Ubiquinone biosynthesis</keyword>
<protein>
    <recommendedName>
        <fullName evidence="1">Ubiquinone/menaquinone biosynthesis C-methyltransferase UbiE</fullName>
        <ecNumber evidence="1">2.1.1.163</ecNumber>
        <ecNumber evidence="1">2.1.1.201</ecNumber>
    </recommendedName>
    <alternativeName>
        <fullName evidence="1">2-methoxy-6-polyprenyl-1,4-benzoquinol methylase</fullName>
    </alternativeName>
    <alternativeName>
        <fullName evidence="1">Demethylmenaquinone methyltransferase</fullName>
    </alternativeName>
</protein>